<accession>D2Y2M2</accession>
<evidence type="ECO:0000250" key="1"/>
<evidence type="ECO:0000250" key="2">
    <source>
        <dbReference type="UniProtKB" id="B3FIS6"/>
    </source>
</evidence>
<evidence type="ECO:0000255" key="3"/>
<evidence type="ECO:0000305" key="4"/>
<proteinExistence type="inferred from homology"/>
<comment type="function">
    <text evidence="1">Ion channel inhibitor.</text>
</comment>
<comment type="subcellular location">
    <subcellularLocation>
        <location evidence="1">Secreted</location>
    </subcellularLocation>
</comment>
<comment type="tissue specificity">
    <text>Expressed by the venom gland.</text>
</comment>
<comment type="domain">
    <text evidence="1">The presence of a 'disulfide through disulfide knot' structurally defines this protein as a knottin.</text>
</comment>
<comment type="similarity">
    <text evidence="4">Belongs to the neurotoxin 10 (Hwtx-1) family. 51 (Hntx-8) subfamily. Hntx-8 sub-subfamily.</text>
</comment>
<comment type="caution">
    <text evidence="4">While it is structurally defined as a knottin it lacks the conserved Cys residue in position 79.</text>
</comment>
<organism>
    <name type="scientific">Cyriopagopus hainanus</name>
    <name type="common">Chinese bird spider</name>
    <name type="synonym">Haplopelma hainanum</name>
    <dbReference type="NCBI Taxonomy" id="209901"/>
    <lineage>
        <taxon>Eukaryota</taxon>
        <taxon>Metazoa</taxon>
        <taxon>Ecdysozoa</taxon>
        <taxon>Arthropoda</taxon>
        <taxon>Chelicerata</taxon>
        <taxon>Arachnida</taxon>
        <taxon>Araneae</taxon>
        <taxon>Mygalomorphae</taxon>
        <taxon>Theraphosidae</taxon>
        <taxon>Haplopelma</taxon>
    </lineage>
</organism>
<sequence>MVNMKASMFLTFAGLVLLFVVCYASESEEKEFPREMLSSIFAVDNDFKQEERDCAGYMRECKEKLCCSGYVCSSRWKWRVLPAPWRR</sequence>
<protein>
    <recommendedName>
        <fullName>U3-theraphotoxin-Hhn1b</fullName>
        <shortName>U3-TRTX-Hhn1b</shortName>
    </recommendedName>
    <alternativeName>
        <fullName>Hainantoxin-VIII-10</fullName>
        <shortName>HNTX-VIII-10</shortName>
    </alternativeName>
</protein>
<keyword id="KW-1015">Disulfide bond</keyword>
<keyword id="KW-0872">Ion channel impairing toxin</keyword>
<keyword id="KW-0960">Knottin</keyword>
<keyword id="KW-0964">Secreted</keyword>
<keyword id="KW-0732">Signal</keyword>
<keyword id="KW-0800">Toxin</keyword>
<name>H8J01_CYRHA</name>
<dbReference type="EMBL" id="GU293099">
    <property type="protein sequence ID" value="ADB56915.1"/>
    <property type="molecule type" value="Genomic_DNA"/>
</dbReference>
<dbReference type="SMR" id="D2Y2M2"/>
<dbReference type="ArachnoServer" id="AS001750">
    <property type="toxin name" value="U3-theraphotoxin-Hhn1b"/>
</dbReference>
<dbReference type="GO" id="GO:0005576">
    <property type="term" value="C:extracellular region"/>
    <property type="evidence" value="ECO:0007669"/>
    <property type="project" value="UniProtKB-SubCell"/>
</dbReference>
<dbReference type="GO" id="GO:0008200">
    <property type="term" value="F:ion channel inhibitor activity"/>
    <property type="evidence" value="ECO:0007669"/>
    <property type="project" value="InterPro"/>
</dbReference>
<dbReference type="GO" id="GO:0090729">
    <property type="term" value="F:toxin activity"/>
    <property type="evidence" value="ECO:0007669"/>
    <property type="project" value="UniProtKB-KW"/>
</dbReference>
<dbReference type="InterPro" id="IPR011696">
    <property type="entry name" value="Huwentoxin-1"/>
</dbReference>
<dbReference type="Pfam" id="PF07740">
    <property type="entry name" value="Toxin_12"/>
    <property type="match status" value="1"/>
</dbReference>
<dbReference type="SUPFAM" id="SSF57059">
    <property type="entry name" value="omega toxin-like"/>
    <property type="match status" value="1"/>
</dbReference>
<reference key="1">
    <citation type="journal article" date="2010" name="J. Proteome Res.">
        <title>Molecular diversification of peptide toxins from the tarantula Haplopelma hainanum (Ornithoctonus hainana) venom based on transcriptomic, peptidomic, and genomic analyses.</title>
        <authorList>
            <person name="Tang X."/>
            <person name="Zhang Y."/>
            <person name="Hu W."/>
            <person name="Xu D."/>
            <person name="Tao H."/>
            <person name="Yang X."/>
            <person name="Li Y."/>
            <person name="Jiang L."/>
            <person name="Liang S."/>
        </authorList>
    </citation>
    <scope>NUCLEOTIDE SEQUENCE [LARGE SCALE GENOMIC DNA]</scope>
    <source>
        <tissue>Venom gland</tissue>
    </source>
</reference>
<feature type="signal peptide" evidence="3">
    <location>
        <begin position="1"/>
        <end position="24"/>
    </location>
</feature>
<feature type="propeptide" id="PRO_0000400633" evidence="1">
    <location>
        <begin position="25"/>
        <end position="52"/>
    </location>
</feature>
<feature type="peptide" id="PRO_0000400634" description="U3-theraphotoxin-Hhn1b">
    <location>
        <begin position="53"/>
        <end position="87"/>
    </location>
</feature>
<feature type="disulfide bond" evidence="2">
    <location>
        <begin position="54"/>
        <end position="67"/>
    </location>
</feature>
<feature type="disulfide bond" evidence="2">
    <location>
        <begin position="61"/>
        <end position="72"/>
    </location>
</feature>